<protein>
    <recommendedName>
        <fullName evidence="1">Small ribosomal subunit protein bS6</fullName>
    </recommendedName>
    <alternativeName>
        <fullName evidence="2">30S ribosomal protein S6</fullName>
    </alternativeName>
</protein>
<reference key="1">
    <citation type="journal article" date="2009" name="BMC Genomics">
        <title>Genome evolution driven by host adaptations results in a more virulent and antimicrobial-resistant Streptococcus pneumoniae serotype 14.</title>
        <authorList>
            <person name="Ding F."/>
            <person name="Tang P."/>
            <person name="Hsu M.-H."/>
            <person name="Cui P."/>
            <person name="Hu S."/>
            <person name="Yu J."/>
            <person name="Chiu C.-H."/>
        </authorList>
    </citation>
    <scope>NUCLEOTIDE SEQUENCE [LARGE SCALE GENOMIC DNA]</scope>
    <source>
        <strain>CGSP14</strain>
    </source>
</reference>
<comment type="function">
    <text evidence="1">Binds together with bS18 to 16S ribosomal RNA.</text>
</comment>
<comment type="similarity">
    <text evidence="1">Belongs to the bacterial ribosomal protein bS6 family.</text>
</comment>
<organism>
    <name type="scientific">Streptococcus pneumoniae (strain CGSP14)</name>
    <dbReference type="NCBI Taxonomy" id="516950"/>
    <lineage>
        <taxon>Bacteria</taxon>
        <taxon>Bacillati</taxon>
        <taxon>Bacillota</taxon>
        <taxon>Bacilli</taxon>
        <taxon>Lactobacillales</taxon>
        <taxon>Streptococcaceae</taxon>
        <taxon>Streptococcus</taxon>
    </lineage>
</organism>
<feature type="chain" id="PRO_1000120812" description="Small ribosomal subunit protein bS6">
    <location>
        <begin position="1"/>
        <end position="96"/>
    </location>
</feature>
<accession>B2IR60</accession>
<gene>
    <name evidence="1" type="primary">rpsF</name>
    <name type="ordered locus">SPCG_1527</name>
</gene>
<sequence>MAKYEILYIIRPNIEEEAKNALVARFDSILTDNGATVVESKTWEKRRLAYEIQDFREGLYHIVNVEANDDAALKEFDRLSKINADILRHMIVKIDA</sequence>
<dbReference type="EMBL" id="CP001033">
    <property type="protein sequence ID" value="ACB90779.1"/>
    <property type="molecule type" value="Genomic_DNA"/>
</dbReference>
<dbReference type="RefSeq" id="WP_001151785.1">
    <property type="nucleotide sequence ID" value="NC_010582.1"/>
</dbReference>
<dbReference type="SMR" id="B2IR60"/>
<dbReference type="GeneID" id="45653220"/>
<dbReference type="KEGG" id="spw:SPCG_1527"/>
<dbReference type="HOGENOM" id="CLU_113441_5_3_9"/>
<dbReference type="GO" id="GO:0005737">
    <property type="term" value="C:cytoplasm"/>
    <property type="evidence" value="ECO:0007669"/>
    <property type="project" value="UniProtKB-ARBA"/>
</dbReference>
<dbReference type="GO" id="GO:1990904">
    <property type="term" value="C:ribonucleoprotein complex"/>
    <property type="evidence" value="ECO:0007669"/>
    <property type="project" value="UniProtKB-KW"/>
</dbReference>
<dbReference type="GO" id="GO:0005840">
    <property type="term" value="C:ribosome"/>
    <property type="evidence" value="ECO:0007669"/>
    <property type="project" value="UniProtKB-KW"/>
</dbReference>
<dbReference type="GO" id="GO:0070181">
    <property type="term" value="F:small ribosomal subunit rRNA binding"/>
    <property type="evidence" value="ECO:0007669"/>
    <property type="project" value="TreeGrafter"/>
</dbReference>
<dbReference type="GO" id="GO:0003735">
    <property type="term" value="F:structural constituent of ribosome"/>
    <property type="evidence" value="ECO:0007669"/>
    <property type="project" value="InterPro"/>
</dbReference>
<dbReference type="GO" id="GO:0006412">
    <property type="term" value="P:translation"/>
    <property type="evidence" value="ECO:0007669"/>
    <property type="project" value="UniProtKB-UniRule"/>
</dbReference>
<dbReference type="CDD" id="cd00473">
    <property type="entry name" value="bS6"/>
    <property type="match status" value="1"/>
</dbReference>
<dbReference type="FunFam" id="3.30.70.60:FF:000002">
    <property type="entry name" value="30S ribosomal protein S6"/>
    <property type="match status" value="1"/>
</dbReference>
<dbReference type="Gene3D" id="3.30.70.60">
    <property type="match status" value="1"/>
</dbReference>
<dbReference type="HAMAP" id="MF_00360">
    <property type="entry name" value="Ribosomal_bS6"/>
    <property type="match status" value="1"/>
</dbReference>
<dbReference type="InterPro" id="IPR000529">
    <property type="entry name" value="Ribosomal_bS6"/>
</dbReference>
<dbReference type="InterPro" id="IPR035980">
    <property type="entry name" value="Ribosomal_bS6_sf"/>
</dbReference>
<dbReference type="InterPro" id="IPR020814">
    <property type="entry name" value="Ribosomal_S6_plastid/chlpt"/>
</dbReference>
<dbReference type="InterPro" id="IPR014717">
    <property type="entry name" value="Transl_elong_EF1B/ribsomal_bS6"/>
</dbReference>
<dbReference type="NCBIfam" id="TIGR00166">
    <property type="entry name" value="S6"/>
    <property type="match status" value="1"/>
</dbReference>
<dbReference type="PANTHER" id="PTHR21011">
    <property type="entry name" value="MITOCHONDRIAL 28S RIBOSOMAL PROTEIN S6"/>
    <property type="match status" value="1"/>
</dbReference>
<dbReference type="PANTHER" id="PTHR21011:SF1">
    <property type="entry name" value="SMALL RIBOSOMAL SUBUNIT PROTEIN BS6M"/>
    <property type="match status" value="1"/>
</dbReference>
<dbReference type="Pfam" id="PF01250">
    <property type="entry name" value="Ribosomal_S6"/>
    <property type="match status" value="1"/>
</dbReference>
<dbReference type="SUPFAM" id="SSF54995">
    <property type="entry name" value="Ribosomal protein S6"/>
    <property type="match status" value="1"/>
</dbReference>
<proteinExistence type="inferred from homology"/>
<evidence type="ECO:0000255" key="1">
    <source>
        <dbReference type="HAMAP-Rule" id="MF_00360"/>
    </source>
</evidence>
<evidence type="ECO:0000305" key="2"/>
<keyword id="KW-0687">Ribonucleoprotein</keyword>
<keyword id="KW-0689">Ribosomal protein</keyword>
<keyword id="KW-0694">RNA-binding</keyword>
<keyword id="KW-0699">rRNA-binding</keyword>
<name>RS6_STRPS</name>